<gene>
    <name evidence="1" type="primary">murA</name>
    <name type="ordered locus">Sputcn32_0727</name>
</gene>
<name>MURA_SHEPC</name>
<dbReference type="EC" id="2.5.1.7" evidence="1"/>
<dbReference type="EMBL" id="CP000681">
    <property type="protein sequence ID" value="ABP74457.1"/>
    <property type="molecule type" value="Genomic_DNA"/>
</dbReference>
<dbReference type="SMR" id="A4Y3C4"/>
<dbReference type="STRING" id="319224.Sputcn32_0727"/>
<dbReference type="KEGG" id="spc:Sputcn32_0727"/>
<dbReference type="eggNOG" id="COG0766">
    <property type="taxonomic scope" value="Bacteria"/>
</dbReference>
<dbReference type="HOGENOM" id="CLU_027387_0_0_6"/>
<dbReference type="UniPathway" id="UPA00219"/>
<dbReference type="GO" id="GO:0005737">
    <property type="term" value="C:cytoplasm"/>
    <property type="evidence" value="ECO:0007669"/>
    <property type="project" value="UniProtKB-SubCell"/>
</dbReference>
<dbReference type="GO" id="GO:0008760">
    <property type="term" value="F:UDP-N-acetylglucosamine 1-carboxyvinyltransferase activity"/>
    <property type="evidence" value="ECO:0007669"/>
    <property type="project" value="UniProtKB-UniRule"/>
</dbReference>
<dbReference type="GO" id="GO:0051301">
    <property type="term" value="P:cell division"/>
    <property type="evidence" value="ECO:0007669"/>
    <property type="project" value="UniProtKB-KW"/>
</dbReference>
<dbReference type="GO" id="GO:0071555">
    <property type="term" value="P:cell wall organization"/>
    <property type="evidence" value="ECO:0007669"/>
    <property type="project" value="UniProtKB-KW"/>
</dbReference>
<dbReference type="GO" id="GO:0009252">
    <property type="term" value="P:peptidoglycan biosynthetic process"/>
    <property type="evidence" value="ECO:0007669"/>
    <property type="project" value="UniProtKB-UniRule"/>
</dbReference>
<dbReference type="GO" id="GO:0008360">
    <property type="term" value="P:regulation of cell shape"/>
    <property type="evidence" value="ECO:0007669"/>
    <property type="project" value="UniProtKB-KW"/>
</dbReference>
<dbReference type="GO" id="GO:0019277">
    <property type="term" value="P:UDP-N-acetylgalactosamine biosynthetic process"/>
    <property type="evidence" value="ECO:0007669"/>
    <property type="project" value="InterPro"/>
</dbReference>
<dbReference type="CDD" id="cd01555">
    <property type="entry name" value="UdpNAET"/>
    <property type="match status" value="1"/>
</dbReference>
<dbReference type="FunFam" id="3.65.10.10:FF:000002">
    <property type="entry name" value="UDP-N-acetylglucosamine 1-carboxyvinyltransferase"/>
    <property type="match status" value="1"/>
</dbReference>
<dbReference type="Gene3D" id="3.65.10.10">
    <property type="entry name" value="Enolpyruvate transferase domain"/>
    <property type="match status" value="2"/>
</dbReference>
<dbReference type="HAMAP" id="MF_00111">
    <property type="entry name" value="MurA"/>
    <property type="match status" value="1"/>
</dbReference>
<dbReference type="InterPro" id="IPR001986">
    <property type="entry name" value="Enolpyruvate_Tfrase_dom"/>
</dbReference>
<dbReference type="InterPro" id="IPR036968">
    <property type="entry name" value="Enolpyruvate_Tfrase_sf"/>
</dbReference>
<dbReference type="InterPro" id="IPR050068">
    <property type="entry name" value="MurA_subfamily"/>
</dbReference>
<dbReference type="InterPro" id="IPR013792">
    <property type="entry name" value="RNA3'P_cycl/enolpyr_Trfase_a/b"/>
</dbReference>
<dbReference type="InterPro" id="IPR005750">
    <property type="entry name" value="UDP_GlcNAc_COvinyl_MurA"/>
</dbReference>
<dbReference type="NCBIfam" id="TIGR01072">
    <property type="entry name" value="murA"/>
    <property type="match status" value="1"/>
</dbReference>
<dbReference type="NCBIfam" id="NF006873">
    <property type="entry name" value="PRK09369.1"/>
    <property type="match status" value="1"/>
</dbReference>
<dbReference type="PANTHER" id="PTHR43783">
    <property type="entry name" value="UDP-N-ACETYLGLUCOSAMINE 1-CARBOXYVINYLTRANSFERASE"/>
    <property type="match status" value="1"/>
</dbReference>
<dbReference type="PANTHER" id="PTHR43783:SF1">
    <property type="entry name" value="UDP-N-ACETYLGLUCOSAMINE 1-CARBOXYVINYLTRANSFERASE"/>
    <property type="match status" value="1"/>
</dbReference>
<dbReference type="Pfam" id="PF00275">
    <property type="entry name" value="EPSP_synthase"/>
    <property type="match status" value="1"/>
</dbReference>
<dbReference type="SUPFAM" id="SSF55205">
    <property type="entry name" value="EPT/RTPC-like"/>
    <property type="match status" value="1"/>
</dbReference>
<protein>
    <recommendedName>
        <fullName evidence="1">UDP-N-acetylglucosamine 1-carboxyvinyltransferase</fullName>
        <ecNumber evidence="1">2.5.1.7</ecNumber>
    </recommendedName>
    <alternativeName>
        <fullName evidence="1">Enoylpyruvate transferase</fullName>
    </alternativeName>
    <alternativeName>
        <fullName evidence="1">UDP-N-acetylglucosamine enolpyruvyl transferase</fullName>
        <shortName evidence="1">EPT</shortName>
    </alternativeName>
</protein>
<reference key="1">
    <citation type="submission" date="2007-04" db="EMBL/GenBank/DDBJ databases">
        <title>Complete sequence of Shewanella putrefaciens CN-32.</title>
        <authorList>
            <consortium name="US DOE Joint Genome Institute"/>
            <person name="Copeland A."/>
            <person name="Lucas S."/>
            <person name="Lapidus A."/>
            <person name="Barry K."/>
            <person name="Detter J.C."/>
            <person name="Glavina del Rio T."/>
            <person name="Hammon N."/>
            <person name="Israni S."/>
            <person name="Dalin E."/>
            <person name="Tice H."/>
            <person name="Pitluck S."/>
            <person name="Chain P."/>
            <person name="Malfatti S."/>
            <person name="Shin M."/>
            <person name="Vergez L."/>
            <person name="Schmutz J."/>
            <person name="Larimer F."/>
            <person name="Land M."/>
            <person name="Hauser L."/>
            <person name="Kyrpides N."/>
            <person name="Mikhailova N."/>
            <person name="Romine M.F."/>
            <person name="Fredrickson J."/>
            <person name="Tiedje J."/>
            <person name="Richardson P."/>
        </authorList>
    </citation>
    <scope>NUCLEOTIDE SEQUENCE [LARGE SCALE GENOMIC DNA]</scope>
    <source>
        <strain>CN-32 / ATCC BAA-453</strain>
    </source>
</reference>
<feature type="chain" id="PRO_1000023103" description="UDP-N-acetylglucosamine 1-carboxyvinyltransferase">
    <location>
        <begin position="1"/>
        <end position="419"/>
    </location>
</feature>
<feature type="active site" description="Proton donor" evidence="1">
    <location>
        <position position="117"/>
    </location>
</feature>
<feature type="binding site" evidence="1">
    <location>
        <begin position="22"/>
        <end position="23"/>
    </location>
    <ligand>
        <name>phosphoenolpyruvate</name>
        <dbReference type="ChEBI" id="CHEBI:58702"/>
    </ligand>
</feature>
<feature type="binding site" evidence="1">
    <location>
        <position position="93"/>
    </location>
    <ligand>
        <name>UDP-N-acetyl-alpha-D-glucosamine</name>
        <dbReference type="ChEBI" id="CHEBI:57705"/>
    </ligand>
</feature>
<feature type="binding site" evidence="1">
    <location>
        <position position="307"/>
    </location>
    <ligand>
        <name>UDP-N-acetyl-alpha-D-glucosamine</name>
        <dbReference type="ChEBI" id="CHEBI:57705"/>
    </ligand>
</feature>
<feature type="binding site" evidence="1">
    <location>
        <position position="329"/>
    </location>
    <ligand>
        <name>UDP-N-acetyl-alpha-D-glucosamine</name>
        <dbReference type="ChEBI" id="CHEBI:57705"/>
    </ligand>
</feature>
<feature type="modified residue" description="2-(S-cysteinyl)pyruvic acid O-phosphothioketal" evidence="1">
    <location>
        <position position="117"/>
    </location>
</feature>
<comment type="function">
    <text evidence="1">Cell wall formation. Adds enolpyruvyl to UDP-N-acetylglucosamine.</text>
</comment>
<comment type="catalytic activity">
    <reaction evidence="1">
        <text>phosphoenolpyruvate + UDP-N-acetyl-alpha-D-glucosamine = UDP-N-acetyl-3-O-(1-carboxyvinyl)-alpha-D-glucosamine + phosphate</text>
        <dbReference type="Rhea" id="RHEA:18681"/>
        <dbReference type="ChEBI" id="CHEBI:43474"/>
        <dbReference type="ChEBI" id="CHEBI:57705"/>
        <dbReference type="ChEBI" id="CHEBI:58702"/>
        <dbReference type="ChEBI" id="CHEBI:68483"/>
        <dbReference type="EC" id="2.5.1.7"/>
    </reaction>
</comment>
<comment type="pathway">
    <text evidence="1">Cell wall biogenesis; peptidoglycan biosynthesis.</text>
</comment>
<comment type="subcellular location">
    <subcellularLocation>
        <location evidence="1">Cytoplasm</location>
    </subcellularLocation>
</comment>
<comment type="similarity">
    <text evidence="1">Belongs to the EPSP synthase family. MurA subfamily.</text>
</comment>
<proteinExistence type="inferred from homology"/>
<evidence type="ECO:0000255" key="1">
    <source>
        <dbReference type="HAMAP-Rule" id="MF_00111"/>
    </source>
</evidence>
<accession>A4Y3C4</accession>
<keyword id="KW-0131">Cell cycle</keyword>
<keyword id="KW-0132">Cell division</keyword>
<keyword id="KW-0133">Cell shape</keyword>
<keyword id="KW-0961">Cell wall biogenesis/degradation</keyword>
<keyword id="KW-0963">Cytoplasm</keyword>
<keyword id="KW-0573">Peptidoglycan synthesis</keyword>
<keyword id="KW-0670">Pyruvate</keyword>
<keyword id="KW-0808">Transferase</keyword>
<organism>
    <name type="scientific">Shewanella putrefaciens (strain CN-32 / ATCC BAA-453)</name>
    <dbReference type="NCBI Taxonomy" id="319224"/>
    <lineage>
        <taxon>Bacteria</taxon>
        <taxon>Pseudomonadati</taxon>
        <taxon>Pseudomonadota</taxon>
        <taxon>Gammaproteobacteria</taxon>
        <taxon>Alteromonadales</taxon>
        <taxon>Shewanellaceae</taxon>
        <taxon>Shewanella</taxon>
    </lineage>
</organism>
<sequence>MDKLTIQASPPLAGDVIISGAKNAALPILMAGVLAETDFVVSNVPNLRDVSTSCKLLRCLGAEVTELGDGQIRISTTNLNEFCAPYDLVKTMRASILILGPLLARYGTADVSLPGGCAIGARPVNLHLHGLEMMGAKIEVKEGYIKARVDGRLKGAHIFMDMVSVGATENLLMAAALADGETVIENAAREPEVIDLANCLIAMGAKITGVGSATLRIQGVERLQGCEYRVMPDRIETGSFLVAAAVTRGRIRCLKADPASLESVIAKLEDAGAKITTGEDWIELDMEGKRPKAVNIKTAPYPGFPTDMQAQFCVLNALAQGTATITETIFENRFMHVPELIRMGATMELEGNTCIIQGIESLSGAQVMATDLRASASLVIAGLVADGKTIVDRIYHLDRGYEHIEQKFQGLGAHVERVQ</sequence>